<reference key="1">
    <citation type="journal article" date="2007" name="PLoS Genet.">
        <title>Patterns and implications of gene gain and loss in the evolution of Prochlorococcus.</title>
        <authorList>
            <person name="Kettler G.C."/>
            <person name="Martiny A.C."/>
            <person name="Huang K."/>
            <person name="Zucker J."/>
            <person name="Coleman M.L."/>
            <person name="Rodrigue S."/>
            <person name="Chen F."/>
            <person name="Lapidus A."/>
            <person name="Ferriera S."/>
            <person name="Johnson J."/>
            <person name="Steglich C."/>
            <person name="Church G.M."/>
            <person name="Richardson P."/>
            <person name="Chisholm S.W."/>
        </authorList>
    </citation>
    <scope>NUCLEOTIDE SEQUENCE [LARGE SCALE GENOMIC DNA]</scope>
    <source>
        <strain>NATL2A</strain>
    </source>
</reference>
<keyword id="KW-0201">Cytochrome c-type biogenesis</keyword>
<keyword id="KW-0472">Membrane</keyword>
<keyword id="KW-1185">Reference proteome</keyword>
<keyword id="KW-0793">Thylakoid</keyword>
<keyword id="KW-0812">Transmembrane</keyword>
<keyword id="KW-1133">Transmembrane helix</keyword>
<accession>Q46J48</accession>
<evidence type="ECO:0000255" key="1">
    <source>
        <dbReference type="HAMAP-Rule" id="MF_01392"/>
    </source>
</evidence>
<comment type="function">
    <text evidence="1">Required during biogenesis of c-type cytochromes (cytochrome c6 and cytochrome f) at the step of heme attachment.</text>
</comment>
<comment type="subunit">
    <text evidence="1">May interact with CcsA.</text>
</comment>
<comment type="subcellular location">
    <subcellularLocation>
        <location evidence="1">Cellular thylakoid membrane</location>
        <topology evidence="1">Multi-pass membrane protein</topology>
    </subcellularLocation>
</comment>
<comment type="similarity">
    <text evidence="1">Belongs to the Ccs1/CcsB family.</text>
</comment>
<organism>
    <name type="scientific">Prochlorococcus marinus (strain NATL2A)</name>
    <dbReference type="NCBI Taxonomy" id="59920"/>
    <lineage>
        <taxon>Bacteria</taxon>
        <taxon>Bacillati</taxon>
        <taxon>Cyanobacteriota</taxon>
        <taxon>Cyanophyceae</taxon>
        <taxon>Synechococcales</taxon>
        <taxon>Prochlorococcaceae</taxon>
        <taxon>Prochlorococcus</taxon>
    </lineage>
</organism>
<sequence length="426" mass="47507">MKKISQVLNWLSSLKIAILLLLVIAVSCAAGTLIPQQESNQFYYDNFNKNPFLGIINAKILLLFEFDHVYTSFWFLFLLIWLGLALSVCSFRRQLPILKSALNWIDYKSPSQIAKLSVAQTIVTNNCAKSLEKIKLNLKKQGWNVKETDGRIAARQGVIGRLGPILIHLGMILLMIGATYGSLNGKTIEKFLAPGRSIDLLNNNEEKGLTIELQKFQIERDPQGRAEQYKSIVNVIEPNGNNQSKEISVNYPLRYKGLTLYQADWSLAAITIKIDNSPKLQIPIKPISELGEQVWGTIIPTNKDGKNQILLTVDSELGPVNIYDNDGTLLTKLIINKEEKVKGALIKIINIIPSSGLLLKHDPGVPFVYLSFAIILIGGSLSIISTKKIWVLHENEKSMIYIGGLSNRNLSGLSKELPNLISFLET</sequence>
<name>CCS1_PROMT</name>
<proteinExistence type="inferred from homology"/>
<gene>
    <name evidence="1" type="primary">ccsB</name>
    <name evidence="1" type="synonym">ccs1</name>
    <name type="ordered locus">PMN2A_0990</name>
</gene>
<dbReference type="EMBL" id="CP000095">
    <property type="protein sequence ID" value="AAZ58480.1"/>
    <property type="molecule type" value="Genomic_DNA"/>
</dbReference>
<dbReference type="RefSeq" id="WP_011295335.1">
    <property type="nucleotide sequence ID" value="NC_007335.2"/>
</dbReference>
<dbReference type="STRING" id="59920.PMN2A_0990"/>
<dbReference type="KEGG" id="pmn:PMN2A_0990"/>
<dbReference type="HOGENOM" id="CLU_034630_0_0_3"/>
<dbReference type="OrthoDB" id="9770923at2"/>
<dbReference type="PhylomeDB" id="Q46J48"/>
<dbReference type="Proteomes" id="UP000002535">
    <property type="component" value="Chromosome"/>
</dbReference>
<dbReference type="GO" id="GO:0031676">
    <property type="term" value="C:plasma membrane-derived thylakoid membrane"/>
    <property type="evidence" value="ECO:0007669"/>
    <property type="project" value="UniProtKB-SubCell"/>
</dbReference>
<dbReference type="GO" id="GO:0017004">
    <property type="term" value="P:cytochrome complex assembly"/>
    <property type="evidence" value="ECO:0007669"/>
    <property type="project" value="UniProtKB-UniRule"/>
</dbReference>
<dbReference type="HAMAP" id="MF_01392">
    <property type="entry name" value="CytC_Ccs1"/>
    <property type="match status" value="1"/>
</dbReference>
<dbReference type="InterPro" id="IPR023494">
    <property type="entry name" value="Cyt_c_bgen_Ccs1/CcsB/ResB"/>
</dbReference>
<dbReference type="InterPro" id="IPR007816">
    <property type="entry name" value="ResB-like_domain"/>
</dbReference>
<dbReference type="PANTHER" id="PTHR31566">
    <property type="entry name" value="CYTOCHROME C BIOGENESIS PROTEIN CCS1, CHLOROPLASTIC"/>
    <property type="match status" value="1"/>
</dbReference>
<dbReference type="PANTHER" id="PTHR31566:SF0">
    <property type="entry name" value="CYTOCHROME C BIOGENESIS PROTEIN CCS1, CHLOROPLASTIC"/>
    <property type="match status" value="1"/>
</dbReference>
<dbReference type="Pfam" id="PF05140">
    <property type="entry name" value="ResB"/>
    <property type="match status" value="1"/>
</dbReference>
<protein>
    <recommendedName>
        <fullName evidence="1">Cytochrome c biogenesis protein CcsB</fullName>
    </recommendedName>
</protein>
<feature type="chain" id="PRO_5000100572" description="Cytochrome c biogenesis protein CcsB">
    <location>
        <begin position="1"/>
        <end position="426"/>
    </location>
</feature>
<feature type="transmembrane region" description="Helical" evidence="1">
    <location>
        <begin position="14"/>
        <end position="34"/>
    </location>
</feature>
<feature type="transmembrane region" description="Helical" evidence="1">
    <location>
        <begin position="72"/>
        <end position="92"/>
    </location>
</feature>
<feature type="transmembrane region" description="Helical" evidence="1">
    <location>
        <begin position="162"/>
        <end position="182"/>
    </location>
</feature>